<reference key="1">
    <citation type="journal article" date="2009" name="PLoS Genet.">
        <title>Adaptations to submarine hydrothermal environments exemplified by the genome of Nautilia profundicola.</title>
        <authorList>
            <person name="Campbell B.J."/>
            <person name="Smith J.L."/>
            <person name="Hanson T.E."/>
            <person name="Klotz M.G."/>
            <person name="Stein L.Y."/>
            <person name="Lee C.K."/>
            <person name="Wu D."/>
            <person name="Robinson J.M."/>
            <person name="Khouri H.M."/>
            <person name="Eisen J.A."/>
            <person name="Cary S.C."/>
        </authorList>
    </citation>
    <scope>NUCLEOTIDE SEQUENCE [LARGE SCALE GENOMIC DNA]</scope>
    <source>
        <strain>ATCC BAA-1463 / DSM 18972 / AmH</strain>
    </source>
</reference>
<accession>B9L9Y8</accession>
<feature type="chain" id="PRO_1000191158" description="Adenylate kinase">
    <location>
        <begin position="1"/>
        <end position="192"/>
    </location>
</feature>
<feature type="region of interest" description="NMP" evidence="1">
    <location>
        <begin position="34"/>
        <end position="63"/>
    </location>
</feature>
<feature type="region of interest" description="LID" evidence="1">
    <location>
        <begin position="130"/>
        <end position="136"/>
    </location>
</feature>
<feature type="binding site" evidence="1">
    <location>
        <begin position="12"/>
        <end position="17"/>
    </location>
    <ligand>
        <name>ATP</name>
        <dbReference type="ChEBI" id="CHEBI:30616"/>
    </ligand>
</feature>
<feature type="binding site" evidence="1">
    <location>
        <position position="35"/>
    </location>
    <ligand>
        <name>AMP</name>
        <dbReference type="ChEBI" id="CHEBI:456215"/>
    </ligand>
</feature>
<feature type="binding site" evidence="1">
    <location>
        <position position="40"/>
    </location>
    <ligand>
        <name>AMP</name>
        <dbReference type="ChEBI" id="CHEBI:456215"/>
    </ligand>
</feature>
<feature type="binding site" evidence="1">
    <location>
        <begin position="61"/>
        <end position="63"/>
    </location>
    <ligand>
        <name>AMP</name>
        <dbReference type="ChEBI" id="CHEBI:456215"/>
    </ligand>
</feature>
<feature type="binding site" evidence="1">
    <location>
        <begin position="88"/>
        <end position="91"/>
    </location>
    <ligand>
        <name>AMP</name>
        <dbReference type="ChEBI" id="CHEBI:456215"/>
    </ligand>
</feature>
<feature type="binding site" evidence="1">
    <location>
        <position position="95"/>
    </location>
    <ligand>
        <name>AMP</name>
        <dbReference type="ChEBI" id="CHEBI:456215"/>
    </ligand>
</feature>
<feature type="binding site" evidence="1">
    <location>
        <position position="131"/>
    </location>
    <ligand>
        <name>ATP</name>
        <dbReference type="ChEBI" id="CHEBI:30616"/>
    </ligand>
</feature>
<feature type="binding site" evidence="1">
    <location>
        <position position="133"/>
    </location>
    <ligand>
        <name>AMP</name>
        <dbReference type="ChEBI" id="CHEBI:456215"/>
    </ligand>
</feature>
<feature type="binding site" evidence="1">
    <location>
        <position position="145"/>
    </location>
    <ligand>
        <name>AMP</name>
        <dbReference type="ChEBI" id="CHEBI:456215"/>
    </ligand>
</feature>
<feature type="binding site" evidence="1">
    <location>
        <position position="173"/>
    </location>
    <ligand>
        <name>ATP</name>
        <dbReference type="ChEBI" id="CHEBI:30616"/>
    </ligand>
</feature>
<dbReference type="EC" id="2.7.4.3" evidence="1"/>
<dbReference type="EMBL" id="CP001279">
    <property type="protein sequence ID" value="ACM92710.1"/>
    <property type="molecule type" value="Genomic_DNA"/>
</dbReference>
<dbReference type="RefSeq" id="WP_015901762.1">
    <property type="nucleotide sequence ID" value="NC_012115.1"/>
</dbReference>
<dbReference type="SMR" id="B9L9Y8"/>
<dbReference type="STRING" id="598659.NAMH_1047"/>
<dbReference type="KEGG" id="nam:NAMH_1047"/>
<dbReference type="eggNOG" id="COG0563">
    <property type="taxonomic scope" value="Bacteria"/>
</dbReference>
<dbReference type="HOGENOM" id="CLU_032354_4_1_7"/>
<dbReference type="OrthoDB" id="9805030at2"/>
<dbReference type="UniPathway" id="UPA00588">
    <property type="reaction ID" value="UER00649"/>
</dbReference>
<dbReference type="Proteomes" id="UP000000448">
    <property type="component" value="Chromosome"/>
</dbReference>
<dbReference type="GO" id="GO:0005737">
    <property type="term" value="C:cytoplasm"/>
    <property type="evidence" value="ECO:0007669"/>
    <property type="project" value="UniProtKB-SubCell"/>
</dbReference>
<dbReference type="GO" id="GO:0004017">
    <property type="term" value="F:adenylate kinase activity"/>
    <property type="evidence" value="ECO:0007669"/>
    <property type="project" value="UniProtKB-UniRule"/>
</dbReference>
<dbReference type="GO" id="GO:0005524">
    <property type="term" value="F:ATP binding"/>
    <property type="evidence" value="ECO:0007669"/>
    <property type="project" value="UniProtKB-UniRule"/>
</dbReference>
<dbReference type="GO" id="GO:0044209">
    <property type="term" value="P:AMP salvage"/>
    <property type="evidence" value="ECO:0007669"/>
    <property type="project" value="UniProtKB-UniRule"/>
</dbReference>
<dbReference type="CDD" id="cd01428">
    <property type="entry name" value="ADK"/>
    <property type="match status" value="1"/>
</dbReference>
<dbReference type="Gene3D" id="3.40.50.300">
    <property type="entry name" value="P-loop containing nucleotide triphosphate hydrolases"/>
    <property type="match status" value="1"/>
</dbReference>
<dbReference type="HAMAP" id="MF_00235">
    <property type="entry name" value="Adenylate_kinase_Adk"/>
    <property type="match status" value="1"/>
</dbReference>
<dbReference type="InterPro" id="IPR000850">
    <property type="entry name" value="Adenylat/UMP-CMP_kin"/>
</dbReference>
<dbReference type="InterPro" id="IPR033690">
    <property type="entry name" value="Adenylat_kinase_CS"/>
</dbReference>
<dbReference type="InterPro" id="IPR027417">
    <property type="entry name" value="P-loop_NTPase"/>
</dbReference>
<dbReference type="NCBIfam" id="NF001384">
    <property type="entry name" value="PRK00279.2-2"/>
    <property type="match status" value="1"/>
</dbReference>
<dbReference type="PANTHER" id="PTHR23359">
    <property type="entry name" value="NUCLEOTIDE KINASE"/>
    <property type="match status" value="1"/>
</dbReference>
<dbReference type="Pfam" id="PF00406">
    <property type="entry name" value="ADK"/>
    <property type="match status" value="1"/>
</dbReference>
<dbReference type="PRINTS" id="PR00094">
    <property type="entry name" value="ADENYLTKNASE"/>
</dbReference>
<dbReference type="SUPFAM" id="SSF52540">
    <property type="entry name" value="P-loop containing nucleoside triphosphate hydrolases"/>
    <property type="match status" value="1"/>
</dbReference>
<dbReference type="PROSITE" id="PS00113">
    <property type="entry name" value="ADENYLATE_KINASE"/>
    <property type="match status" value="1"/>
</dbReference>
<gene>
    <name evidence="1" type="primary">adk</name>
    <name type="ordered locus">NAMH_1047</name>
</gene>
<protein>
    <recommendedName>
        <fullName evidence="1">Adenylate kinase</fullName>
        <shortName evidence="1">AK</shortName>
        <ecNumber evidence="1">2.7.4.3</ecNumber>
    </recommendedName>
    <alternativeName>
        <fullName evidence="1">ATP-AMP transphosphorylase</fullName>
    </alternativeName>
    <alternativeName>
        <fullName evidence="1">ATP:AMP phosphotransferase</fullName>
    </alternativeName>
    <alternativeName>
        <fullName evidence="1">Adenylate monophosphate kinase</fullName>
    </alternativeName>
</protein>
<evidence type="ECO:0000255" key="1">
    <source>
        <dbReference type="HAMAP-Rule" id="MF_00235"/>
    </source>
</evidence>
<name>KAD_NAUPA</name>
<keyword id="KW-0067">ATP-binding</keyword>
<keyword id="KW-0963">Cytoplasm</keyword>
<keyword id="KW-0418">Kinase</keyword>
<keyword id="KW-0545">Nucleotide biosynthesis</keyword>
<keyword id="KW-0547">Nucleotide-binding</keyword>
<keyword id="KW-0808">Transferase</keyword>
<comment type="function">
    <text evidence="1">Catalyzes the reversible transfer of the terminal phosphate group between ATP and AMP. Plays an important role in cellular energy homeostasis and in adenine nucleotide metabolism.</text>
</comment>
<comment type="catalytic activity">
    <reaction evidence="1">
        <text>AMP + ATP = 2 ADP</text>
        <dbReference type="Rhea" id="RHEA:12973"/>
        <dbReference type="ChEBI" id="CHEBI:30616"/>
        <dbReference type="ChEBI" id="CHEBI:456215"/>
        <dbReference type="ChEBI" id="CHEBI:456216"/>
        <dbReference type="EC" id="2.7.4.3"/>
    </reaction>
</comment>
<comment type="pathway">
    <text evidence="1">Purine metabolism; AMP biosynthesis via salvage pathway; AMP from ADP: step 1/1.</text>
</comment>
<comment type="subunit">
    <text evidence="1">Monomer.</text>
</comment>
<comment type="subcellular location">
    <subcellularLocation>
        <location evidence="1">Cytoplasm</location>
    </subcellularLocation>
</comment>
<comment type="domain">
    <text evidence="1">Consists of three domains, a large central CORE domain and two small peripheral domains, NMPbind and LID, which undergo movements during catalysis. The LID domain closes over the site of phosphoryl transfer upon ATP binding. Assembling and dissambling the active center during each catalytic cycle provides an effective means to prevent ATP hydrolysis.</text>
</comment>
<comment type="similarity">
    <text evidence="1">Belongs to the adenylate kinase family.</text>
</comment>
<sequence>MKKLFLIIGAPGSGKTTDAELIAERNSDKIVHYSTGDLLRAEVASGSELGQTIKSYIDNGNLVPLEIVINTIKSAIEKAPKDIVLIDGFPRSVEQMKALDEMLKNTDDIELVSVIEVEVSEDVARERVLGRARGADDNVEVFNNRMKVFTEPLKDIQDFYSAQGKLIKINGERTIEEIVDEMEQVIKEKAGI</sequence>
<organism>
    <name type="scientific">Nautilia profundicola (strain ATCC BAA-1463 / DSM 18972 / AmH)</name>
    <dbReference type="NCBI Taxonomy" id="598659"/>
    <lineage>
        <taxon>Bacteria</taxon>
        <taxon>Pseudomonadati</taxon>
        <taxon>Campylobacterota</taxon>
        <taxon>Epsilonproteobacteria</taxon>
        <taxon>Nautiliales</taxon>
        <taxon>Nautiliaceae</taxon>
        <taxon>Nautilia</taxon>
    </lineage>
</organism>
<proteinExistence type="inferred from homology"/>